<protein>
    <recommendedName>
        <fullName>WAT1-related protein At3g02690, chloroplastic</fullName>
    </recommendedName>
</protein>
<name>WTR16_ARATH</name>
<comment type="subcellular location">
    <subcellularLocation>
        <location evidence="3">Plastid</location>
        <location evidence="3">Chloroplast membrane</location>
        <topology evidence="3">Multi-pass membrane protein</topology>
    </subcellularLocation>
</comment>
<comment type="similarity">
    <text evidence="4">Belongs to the drug/metabolite transporter (DMT) superfamily. Plant drug/metabolite exporter (P-DME) (TC 2.A.7.4) family.</text>
</comment>
<comment type="sequence caution" evidence="4">
    <conflict type="erroneous gene model prediction">
        <sequence resource="EMBL-CDS" id="AAF32476"/>
    </conflict>
</comment>
<gene>
    <name type="ordered locus">At3g02690</name>
    <name type="ORF">F16B3.32</name>
</gene>
<accession>Q93V85</accession>
<accession>Q9M873</accession>
<dbReference type="EMBL" id="AC021640">
    <property type="protein sequence ID" value="AAF32476.1"/>
    <property type="status" value="ALT_SEQ"/>
    <property type="molecule type" value="Genomic_DNA"/>
</dbReference>
<dbReference type="EMBL" id="CP002686">
    <property type="protein sequence ID" value="AEE73848.1"/>
    <property type="molecule type" value="Genomic_DNA"/>
</dbReference>
<dbReference type="EMBL" id="AF428434">
    <property type="protein sequence ID" value="AAL16203.1"/>
    <property type="molecule type" value="mRNA"/>
</dbReference>
<dbReference type="EMBL" id="AY045633">
    <property type="protein sequence ID" value="AAK73991.1"/>
    <property type="molecule type" value="mRNA"/>
</dbReference>
<dbReference type="EMBL" id="AY133570">
    <property type="protein sequence ID" value="AAM91400.1"/>
    <property type="molecule type" value="mRNA"/>
</dbReference>
<dbReference type="EMBL" id="AY087405">
    <property type="protein sequence ID" value="AAM64954.1"/>
    <property type="molecule type" value="mRNA"/>
</dbReference>
<dbReference type="RefSeq" id="NP_566180.1">
    <property type="nucleotide sequence ID" value="NM_111137.4"/>
</dbReference>
<dbReference type="SMR" id="Q93V85"/>
<dbReference type="BioGRID" id="6607">
    <property type="interactions" value="2"/>
</dbReference>
<dbReference type="FunCoup" id="Q93V85">
    <property type="interactions" value="609"/>
</dbReference>
<dbReference type="IntAct" id="Q93V85">
    <property type="interactions" value="3"/>
</dbReference>
<dbReference type="STRING" id="3702.Q93V85"/>
<dbReference type="PaxDb" id="3702-AT3G02690.1"/>
<dbReference type="EnsemblPlants" id="AT3G02690.1">
    <property type="protein sequence ID" value="AT3G02690.1"/>
    <property type="gene ID" value="AT3G02690"/>
</dbReference>
<dbReference type="GeneID" id="821274"/>
<dbReference type="Gramene" id="AT3G02690.1">
    <property type="protein sequence ID" value="AT3G02690.1"/>
    <property type="gene ID" value="AT3G02690"/>
</dbReference>
<dbReference type="KEGG" id="ath:AT3G02690"/>
<dbReference type="Araport" id="AT3G02690"/>
<dbReference type="TAIR" id="AT3G02690"/>
<dbReference type="eggNOG" id="ENOG502QQKE">
    <property type="taxonomic scope" value="Eukaryota"/>
</dbReference>
<dbReference type="HOGENOM" id="CLU_033863_7_0_1"/>
<dbReference type="InParanoid" id="Q93V85"/>
<dbReference type="OMA" id="AYGLFFY"/>
<dbReference type="OrthoDB" id="1917929at2759"/>
<dbReference type="PhylomeDB" id="Q93V85"/>
<dbReference type="PRO" id="PR:Q93V85"/>
<dbReference type="Proteomes" id="UP000006548">
    <property type="component" value="Chromosome 3"/>
</dbReference>
<dbReference type="ExpressionAtlas" id="Q93V85">
    <property type="expression patterns" value="baseline and differential"/>
</dbReference>
<dbReference type="GO" id="GO:0009507">
    <property type="term" value="C:chloroplast"/>
    <property type="evidence" value="ECO:0007005"/>
    <property type="project" value="TAIR"/>
</dbReference>
<dbReference type="GO" id="GO:0031969">
    <property type="term" value="C:chloroplast membrane"/>
    <property type="evidence" value="ECO:0007669"/>
    <property type="project" value="UniProtKB-SubCell"/>
</dbReference>
<dbReference type="InterPro" id="IPR050638">
    <property type="entry name" value="AA-Vitamin_Transporters"/>
</dbReference>
<dbReference type="InterPro" id="IPR000620">
    <property type="entry name" value="EamA_dom"/>
</dbReference>
<dbReference type="PANTHER" id="PTHR32322:SF2">
    <property type="entry name" value="EAMA DOMAIN-CONTAINING PROTEIN"/>
    <property type="match status" value="1"/>
</dbReference>
<dbReference type="PANTHER" id="PTHR32322">
    <property type="entry name" value="INNER MEMBRANE TRANSPORTER"/>
    <property type="match status" value="1"/>
</dbReference>
<dbReference type="Pfam" id="PF00892">
    <property type="entry name" value="EamA"/>
    <property type="match status" value="2"/>
</dbReference>
<dbReference type="SUPFAM" id="SSF103481">
    <property type="entry name" value="Multidrug resistance efflux transporter EmrE"/>
    <property type="match status" value="2"/>
</dbReference>
<reference key="1">
    <citation type="journal article" date="2000" name="Nature">
        <title>Sequence and analysis of chromosome 3 of the plant Arabidopsis thaliana.</title>
        <authorList>
            <person name="Salanoubat M."/>
            <person name="Lemcke K."/>
            <person name="Rieger M."/>
            <person name="Ansorge W."/>
            <person name="Unseld M."/>
            <person name="Fartmann B."/>
            <person name="Valle G."/>
            <person name="Bloecker H."/>
            <person name="Perez-Alonso M."/>
            <person name="Obermaier B."/>
            <person name="Delseny M."/>
            <person name="Boutry M."/>
            <person name="Grivell L.A."/>
            <person name="Mache R."/>
            <person name="Puigdomenech P."/>
            <person name="De Simone V."/>
            <person name="Choisne N."/>
            <person name="Artiguenave F."/>
            <person name="Robert C."/>
            <person name="Brottier P."/>
            <person name="Wincker P."/>
            <person name="Cattolico L."/>
            <person name="Weissenbach J."/>
            <person name="Saurin W."/>
            <person name="Quetier F."/>
            <person name="Schaefer M."/>
            <person name="Mueller-Auer S."/>
            <person name="Gabel C."/>
            <person name="Fuchs M."/>
            <person name="Benes V."/>
            <person name="Wurmbach E."/>
            <person name="Drzonek H."/>
            <person name="Erfle H."/>
            <person name="Jordan N."/>
            <person name="Bangert S."/>
            <person name="Wiedelmann R."/>
            <person name="Kranz H."/>
            <person name="Voss H."/>
            <person name="Holland R."/>
            <person name="Brandt P."/>
            <person name="Nyakatura G."/>
            <person name="Vezzi A."/>
            <person name="D'Angelo M."/>
            <person name="Pallavicini A."/>
            <person name="Toppo S."/>
            <person name="Simionati B."/>
            <person name="Conrad A."/>
            <person name="Hornischer K."/>
            <person name="Kauer G."/>
            <person name="Loehnert T.-H."/>
            <person name="Nordsiek G."/>
            <person name="Reichelt J."/>
            <person name="Scharfe M."/>
            <person name="Schoen O."/>
            <person name="Bargues M."/>
            <person name="Terol J."/>
            <person name="Climent J."/>
            <person name="Navarro P."/>
            <person name="Collado C."/>
            <person name="Perez-Perez A."/>
            <person name="Ottenwaelder B."/>
            <person name="Duchemin D."/>
            <person name="Cooke R."/>
            <person name="Laudie M."/>
            <person name="Berger-Llauro C."/>
            <person name="Purnelle B."/>
            <person name="Masuy D."/>
            <person name="de Haan M."/>
            <person name="Maarse A.C."/>
            <person name="Alcaraz J.-P."/>
            <person name="Cottet A."/>
            <person name="Casacuberta E."/>
            <person name="Monfort A."/>
            <person name="Argiriou A."/>
            <person name="Flores M."/>
            <person name="Liguori R."/>
            <person name="Vitale D."/>
            <person name="Mannhaupt G."/>
            <person name="Haase D."/>
            <person name="Schoof H."/>
            <person name="Rudd S."/>
            <person name="Zaccaria P."/>
            <person name="Mewes H.-W."/>
            <person name="Mayer K.F.X."/>
            <person name="Kaul S."/>
            <person name="Town C.D."/>
            <person name="Koo H.L."/>
            <person name="Tallon L.J."/>
            <person name="Jenkins J."/>
            <person name="Rooney T."/>
            <person name="Rizzo M."/>
            <person name="Walts A."/>
            <person name="Utterback T."/>
            <person name="Fujii C.Y."/>
            <person name="Shea T.P."/>
            <person name="Creasy T.H."/>
            <person name="Haas B."/>
            <person name="Maiti R."/>
            <person name="Wu D."/>
            <person name="Peterson J."/>
            <person name="Van Aken S."/>
            <person name="Pai G."/>
            <person name="Militscher J."/>
            <person name="Sellers P."/>
            <person name="Gill J.E."/>
            <person name="Feldblyum T.V."/>
            <person name="Preuss D."/>
            <person name="Lin X."/>
            <person name="Nierman W.C."/>
            <person name="Salzberg S.L."/>
            <person name="White O."/>
            <person name="Venter J.C."/>
            <person name="Fraser C.M."/>
            <person name="Kaneko T."/>
            <person name="Nakamura Y."/>
            <person name="Sato S."/>
            <person name="Kato T."/>
            <person name="Asamizu E."/>
            <person name="Sasamoto S."/>
            <person name="Kimura T."/>
            <person name="Idesawa K."/>
            <person name="Kawashima K."/>
            <person name="Kishida Y."/>
            <person name="Kiyokawa C."/>
            <person name="Kohara M."/>
            <person name="Matsumoto M."/>
            <person name="Matsuno A."/>
            <person name="Muraki A."/>
            <person name="Nakayama S."/>
            <person name="Nakazaki N."/>
            <person name="Shinpo S."/>
            <person name="Takeuchi C."/>
            <person name="Wada T."/>
            <person name="Watanabe A."/>
            <person name="Yamada M."/>
            <person name="Yasuda M."/>
            <person name="Tabata S."/>
        </authorList>
    </citation>
    <scope>NUCLEOTIDE SEQUENCE [LARGE SCALE GENOMIC DNA]</scope>
    <source>
        <strain>cv. Columbia</strain>
    </source>
</reference>
<reference key="2">
    <citation type="journal article" date="2017" name="Plant J.">
        <title>Araport11: a complete reannotation of the Arabidopsis thaliana reference genome.</title>
        <authorList>
            <person name="Cheng C.Y."/>
            <person name="Krishnakumar V."/>
            <person name="Chan A.P."/>
            <person name="Thibaud-Nissen F."/>
            <person name="Schobel S."/>
            <person name="Town C.D."/>
        </authorList>
    </citation>
    <scope>GENOME REANNOTATION</scope>
    <source>
        <strain>cv. Columbia</strain>
    </source>
</reference>
<reference key="3">
    <citation type="journal article" date="2003" name="Science">
        <title>Empirical analysis of transcriptional activity in the Arabidopsis genome.</title>
        <authorList>
            <person name="Yamada K."/>
            <person name="Lim J."/>
            <person name="Dale J.M."/>
            <person name="Chen H."/>
            <person name="Shinn P."/>
            <person name="Palm C.J."/>
            <person name="Southwick A.M."/>
            <person name="Wu H.C."/>
            <person name="Kim C.J."/>
            <person name="Nguyen M."/>
            <person name="Pham P.K."/>
            <person name="Cheuk R.F."/>
            <person name="Karlin-Newmann G."/>
            <person name="Liu S.X."/>
            <person name="Lam B."/>
            <person name="Sakano H."/>
            <person name="Wu T."/>
            <person name="Yu G."/>
            <person name="Miranda M."/>
            <person name="Quach H.L."/>
            <person name="Tripp M."/>
            <person name="Chang C.H."/>
            <person name="Lee J.M."/>
            <person name="Toriumi M.J."/>
            <person name="Chan M.M."/>
            <person name="Tang C.C."/>
            <person name="Onodera C.S."/>
            <person name="Deng J.M."/>
            <person name="Akiyama K."/>
            <person name="Ansari Y."/>
            <person name="Arakawa T."/>
            <person name="Banh J."/>
            <person name="Banno F."/>
            <person name="Bowser L."/>
            <person name="Brooks S.Y."/>
            <person name="Carninci P."/>
            <person name="Chao Q."/>
            <person name="Choy N."/>
            <person name="Enju A."/>
            <person name="Goldsmith A.D."/>
            <person name="Gurjal M."/>
            <person name="Hansen N.F."/>
            <person name="Hayashizaki Y."/>
            <person name="Johnson-Hopson C."/>
            <person name="Hsuan V.W."/>
            <person name="Iida K."/>
            <person name="Karnes M."/>
            <person name="Khan S."/>
            <person name="Koesema E."/>
            <person name="Ishida J."/>
            <person name="Jiang P.X."/>
            <person name="Jones T."/>
            <person name="Kawai J."/>
            <person name="Kamiya A."/>
            <person name="Meyers C."/>
            <person name="Nakajima M."/>
            <person name="Narusaka M."/>
            <person name="Seki M."/>
            <person name="Sakurai T."/>
            <person name="Satou M."/>
            <person name="Tamse R."/>
            <person name="Vaysberg M."/>
            <person name="Wallender E.K."/>
            <person name="Wong C."/>
            <person name="Yamamura Y."/>
            <person name="Yuan S."/>
            <person name="Shinozaki K."/>
            <person name="Davis R.W."/>
            <person name="Theologis A."/>
            <person name="Ecker J.R."/>
        </authorList>
    </citation>
    <scope>NUCLEOTIDE SEQUENCE [LARGE SCALE MRNA]</scope>
    <source>
        <strain>cv. Columbia</strain>
    </source>
</reference>
<reference key="4">
    <citation type="submission" date="2002-03" db="EMBL/GenBank/DDBJ databases">
        <title>Full-length cDNA from Arabidopsis thaliana.</title>
        <authorList>
            <person name="Brover V.V."/>
            <person name="Troukhan M.E."/>
            <person name="Alexandrov N.A."/>
            <person name="Lu Y.-P."/>
            <person name="Flavell R.B."/>
            <person name="Feldmann K.A."/>
        </authorList>
    </citation>
    <scope>NUCLEOTIDE SEQUENCE [LARGE SCALE MRNA]</scope>
</reference>
<reference key="5">
    <citation type="journal article" date="2008" name="PLoS ONE">
        <title>Sorting signals, N-terminal modifications and abundance of the chloroplast proteome.</title>
        <authorList>
            <person name="Zybailov B."/>
            <person name="Rutschow H."/>
            <person name="Friso G."/>
            <person name="Rudella A."/>
            <person name="Emanuelsson O."/>
            <person name="Sun Q."/>
            <person name="van Wijk K.J."/>
        </authorList>
    </citation>
    <scope>IDENTIFICATION BY MASS SPECTROMETRY</scope>
    <scope>SUBCELLULAR LOCATION [LARGE SCALE ANALYSIS]</scope>
</reference>
<proteinExistence type="evidence at protein level"/>
<sequence>MEWPWSAIAASSSSSSSCFFASPNSCLSITRRTNLSCVNTSVKSLRHSRFDSKHNLVKRRINGDSVVRRSTTSNNSTEETESSSSSSSVDCVGMGSDVECVNNGEDEENRSSGILSGGEGTFLEWTVLISPFFFWGTAMVAMKEVLPITGPFFVAAFRLIPAGLLLVAFAVYKGRPLPEGINAWFSIALFALVDATCFQGFLAQGLQRTSAGLGSVIIDSQPLTVAVLASFLFGESIGIVRAGGLLLGVAGLLLLEVPSVTSDGNNFSLWGSGEWWMLLAAQSMAIGTVMVRWVSKYSDPIMATGWHMVIGGLPLLAISVINHDPVFNGSLQDLSTNDVIALLYTSIFGSAVSYGVYFYSATKGSLTKLSSLTFLTPMFASIFGYLYLNETFSSLQLVGAAVTLVAIYLVNFPEGND</sequence>
<evidence type="ECO:0000255" key="1"/>
<evidence type="ECO:0000256" key="2">
    <source>
        <dbReference type="SAM" id="MobiDB-lite"/>
    </source>
</evidence>
<evidence type="ECO:0000269" key="3">
    <source>
    </source>
</evidence>
<evidence type="ECO:0000305" key="4"/>
<feature type="transit peptide" description="Chloroplast" evidence="1">
    <location>
        <begin position="1"/>
        <end position="68"/>
    </location>
</feature>
<feature type="chain" id="PRO_0000421324" description="WAT1-related protein At3g02690, chloroplastic">
    <location>
        <begin position="69"/>
        <end position="417"/>
    </location>
</feature>
<feature type="transmembrane region" description="Helical" evidence="1">
    <location>
        <begin position="122"/>
        <end position="142"/>
    </location>
</feature>
<feature type="transmembrane region" description="Helical" evidence="1">
    <location>
        <begin position="152"/>
        <end position="172"/>
    </location>
</feature>
<feature type="transmembrane region" description="Helical" evidence="1">
    <location>
        <begin position="183"/>
        <end position="203"/>
    </location>
</feature>
<feature type="transmembrane region" description="Helical" evidence="1">
    <location>
        <begin position="213"/>
        <end position="233"/>
    </location>
</feature>
<feature type="transmembrane region" description="Helical" evidence="1">
    <location>
        <begin position="237"/>
        <end position="257"/>
    </location>
</feature>
<feature type="transmembrane region" description="Helical" evidence="1">
    <location>
        <begin position="269"/>
        <end position="289"/>
    </location>
</feature>
<feature type="transmembrane region" description="Helical" evidence="1">
    <location>
        <begin position="301"/>
        <end position="321"/>
    </location>
</feature>
<feature type="transmembrane region" description="Helical" evidence="1">
    <location>
        <begin position="339"/>
        <end position="359"/>
    </location>
</feature>
<feature type="transmembrane region" description="Helical" evidence="1">
    <location>
        <begin position="369"/>
        <end position="389"/>
    </location>
</feature>
<feature type="transmembrane region" description="Helical" evidence="1">
    <location>
        <begin position="392"/>
        <end position="412"/>
    </location>
</feature>
<feature type="domain" description="EamA 1">
    <location>
        <begin position="133"/>
        <end position="255"/>
    </location>
</feature>
<feature type="domain" description="EamA 2">
    <location>
        <begin position="283"/>
        <end position="411"/>
    </location>
</feature>
<feature type="region of interest" description="Disordered" evidence="2">
    <location>
        <begin position="67"/>
        <end position="92"/>
    </location>
</feature>
<feature type="compositionally biased region" description="Low complexity" evidence="2">
    <location>
        <begin position="68"/>
        <end position="89"/>
    </location>
</feature>
<keyword id="KW-0150">Chloroplast</keyword>
<keyword id="KW-0472">Membrane</keyword>
<keyword id="KW-0934">Plastid</keyword>
<keyword id="KW-1185">Reference proteome</keyword>
<keyword id="KW-0677">Repeat</keyword>
<keyword id="KW-0809">Transit peptide</keyword>
<keyword id="KW-0812">Transmembrane</keyword>
<keyword id="KW-1133">Transmembrane helix</keyword>
<organism>
    <name type="scientific">Arabidopsis thaliana</name>
    <name type="common">Mouse-ear cress</name>
    <dbReference type="NCBI Taxonomy" id="3702"/>
    <lineage>
        <taxon>Eukaryota</taxon>
        <taxon>Viridiplantae</taxon>
        <taxon>Streptophyta</taxon>
        <taxon>Embryophyta</taxon>
        <taxon>Tracheophyta</taxon>
        <taxon>Spermatophyta</taxon>
        <taxon>Magnoliopsida</taxon>
        <taxon>eudicotyledons</taxon>
        <taxon>Gunneridae</taxon>
        <taxon>Pentapetalae</taxon>
        <taxon>rosids</taxon>
        <taxon>malvids</taxon>
        <taxon>Brassicales</taxon>
        <taxon>Brassicaceae</taxon>
        <taxon>Camelineae</taxon>
        <taxon>Arabidopsis</taxon>
    </lineage>
</organism>